<name>REV7_SCHPO</name>
<protein>
    <recommendedName>
        <fullName>DNA polymerase zeta processivity subunit</fullName>
    </recommendedName>
    <alternativeName>
        <fullName evidence="1">Revertibility protein 7</fullName>
    </alternativeName>
</protein>
<evidence type="ECO:0000250" key="1">
    <source>
        <dbReference type="UniProtKB" id="P38927"/>
    </source>
</evidence>
<evidence type="ECO:0000255" key="2"/>
<evidence type="ECO:0000255" key="3">
    <source>
        <dbReference type="PROSITE-ProRule" id="PRU00109"/>
    </source>
</evidence>
<evidence type="ECO:0000269" key="4">
    <source>
    </source>
</evidence>
<evidence type="ECO:0000305" key="5"/>
<evidence type="ECO:0000312" key="6">
    <source>
        <dbReference type="EMBL" id="CAL45666.1"/>
    </source>
</evidence>
<feature type="chain" id="PRO_0000361056" description="DNA polymerase zeta processivity subunit">
    <location>
        <begin position="1"/>
        <end position="213"/>
    </location>
</feature>
<feature type="domain" description="HORMA" evidence="3">
    <location>
        <begin position="10"/>
        <end position="206"/>
    </location>
</feature>
<gene>
    <name type="primary">rev7</name>
    <name type="ORF">SPAC12D12.09</name>
    <name type="ORF">SPBC12D12.09</name>
</gene>
<proteinExistence type="inferred from homology"/>
<keyword id="KW-0227">DNA damage</keyword>
<keyword id="KW-0234">DNA repair</keyword>
<keyword id="KW-0496">Mitochondrion</keyword>
<keyword id="KW-0539">Nucleus</keyword>
<keyword id="KW-1185">Reference proteome</keyword>
<comment type="function">
    <text evidence="1">Required for DNA damage induced mutagenesis. Involved in DNA repair, mitochondrial DNA repair and translesion synthesis. Has a role in the bypass of abasic (AP) sites (By similarity).</text>
</comment>
<comment type="subunit">
    <text evidence="1">Forms DNA polymerase zeta with rev3.</text>
</comment>
<comment type="subcellular location">
    <subcellularLocation>
        <location evidence="4">Mitochondrion</location>
    </subcellularLocation>
    <subcellularLocation>
        <location evidence="4">Nucleus</location>
    </subcellularLocation>
</comment>
<comment type="similarity">
    <text evidence="2">Belongs to the MAD2 family.</text>
</comment>
<reference evidence="6" key="1">
    <citation type="journal article" date="2002" name="Nature">
        <title>The genome sequence of Schizosaccharomyces pombe.</title>
        <authorList>
            <person name="Wood V."/>
            <person name="Gwilliam R."/>
            <person name="Rajandream M.A."/>
            <person name="Lyne M.H."/>
            <person name="Lyne R."/>
            <person name="Stewart A."/>
            <person name="Sgouros J.G."/>
            <person name="Peat N."/>
            <person name="Hayles J."/>
            <person name="Baker S.G."/>
            <person name="Basham D."/>
            <person name="Bowman S."/>
            <person name="Brooks K."/>
            <person name="Brown D."/>
            <person name="Brown S."/>
            <person name="Chillingworth T."/>
            <person name="Churcher C.M."/>
            <person name="Collins M."/>
            <person name="Connor R."/>
            <person name="Cronin A."/>
            <person name="Davis P."/>
            <person name="Feltwell T."/>
            <person name="Fraser A."/>
            <person name="Gentles S."/>
            <person name="Goble A."/>
            <person name="Hamlin N."/>
            <person name="Harris D.E."/>
            <person name="Hidalgo J."/>
            <person name="Hodgson G."/>
            <person name="Holroyd S."/>
            <person name="Hornsby T."/>
            <person name="Howarth S."/>
            <person name="Huckle E.J."/>
            <person name="Hunt S."/>
            <person name="Jagels K."/>
            <person name="James K.D."/>
            <person name="Jones L."/>
            <person name="Jones M."/>
            <person name="Leather S."/>
            <person name="McDonald S."/>
            <person name="McLean J."/>
            <person name="Mooney P."/>
            <person name="Moule S."/>
            <person name="Mungall K.L."/>
            <person name="Murphy L.D."/>
            <person name="Niblett D."/>
            <person name="Odell C."/>
            <person name="Oliver K."/>
            <person name="O'Neil S."/>
            <person name="Pearson D."/>
            <person name="Quail M.A."/>
            <person name="Rabbinowitsch E."/>
            <person name="Rutherford K.M."/>
            <person name="Rutter S."/>
            <person name="Saunders D."/>
            <person name="Seeger K."/>
            <person name="Sharp S."/>
            <person name="Skelton J."/>
            <person name="Simmonds M.N."/>
            <person name="Squares R."/>
            <person name="Squares S."/>
            <person name="Stevens K."/>
            <person name="Taylor K."/>
            <person name="Taylor R.G."/>
            <person name="Tivey A."/>
            <person name="Walsh S.V."/>
            <person name="Warren T."/>
            <person name="Whitehead S."/>
            <person name="Woodward J.R."/>
            <person name="Volckaert G."/>
            <person name="Aert R."/>
            <person name="Robben J."/>
            <person name="Grymonprez B."/>
            <person name="Weltjens I."/>
            <person name="Vanstreels E."/>
            <person name="Rieger M."/>
            <person name="Schaefer M."/>
            <person name="Mueller-Auer S."/>
            <person name="Gabel C."/>
            <person name="Fuchs M."/>
            <person name="Duesterhoeft A."/>
            <person name="Fritzc C."/>
            <person name="Holzer E."/>
            <person name="Moestl D."/>
            <person name="Hilbert H."/>
            <person name="Borzym K."/>
            <person name="Langer I."/>
            <person name="Beck A."/>
            <person name="Lehrach H."/>
            <person name="Reinhardt R."/>
            <person name="Pohl T.M."/>
            <person name="Eger P."/>
            <person name="Zimmermann W."/>
            <person name="Wedler H."/>
            <person name="Wambutt R."/>
            <person name="Purnelle B."/>
            <person name="Goffeau A."/>
            <person name="Cadieu E."/>
            <person name="Dreano S."/>
            <person name="Gloux S."/>
            <person name="Lelaure V."/>
            <person name="Mottier S."/>
            <person name="Galibert F."/>
            <person name="Aves S.J."/>
            <person name="Xiang Z."/>
            <person name="Hunt C."/>
            <person name="Moore K."/>
            <person name="Hurst S.M."/>
            <person name="Lucas M."/>
            <person name="Rochet M."/>
            <person name="Gaillardin C."/>
            <person name="Tallada V.A."/>
            <person name="Garzon A."/>
            <person name="Thode G."/>
            <person name="Daga R.R."/>
            <person name="Cruzado L."/>
            <person name="Jimenez J."/>
            <person name="Sanchez M."/>
            <person name="del Rey F."/>
            <person name="Benito J."/>
            <person name="Dominguez A."/>
            <person name="Revuelta J.L."/>
            <person name="Moreno S."/>
            <person name="Armstrong J."/>
            <person name="Forsburg S.L."/>
            <person name="Cerutti L."/>
            <person name="Lowe T."/>
            <person name="McCombie W.R."/>
            <person name="Paulsen I."/>
            <person name="Potashkin J."/>
            <person name="Shpakovski G.V."/>
            <person name="Ussery D."/>
            <person name="Barrell B.G."/>
            <person name="Nurse P."/>
        </authorList>
    </citation>
    <scope>NUCLEOTIDE SEQUENCE [LARGE SCALE GENOMIC DNA]</scope>
    <source>
        <strain>972 / ATCC 24843</strain>
    </source>
</reference>
<reference evidence="5" key="2">
    <citation type="journal article" date="2006" name="Nat. Biotechnol.">
        <title>ORFeome cloning and global analysis of protein localization in the fission yeast Schizosaccharomyces pombe.</title>
        <authorList>
            <person name="Matsuyama A."/>
            <person name="Arai R."/>
            <person name="Yashiroda Y."/>
            <person name="Shirai A."/>
            <person name="Kamata A."/>
            <person name="Sekido S."/>
            <person name="Kobayashi Y."/>
            <person name="Hashimoto A."/>
            <person name="Hamamoto M."/>
            <person name="Hiraoka Y."/>
            <person name="Horinouchi S."/>
            <person name="Yoshida M."/>
        </authorList>
    </citation>
    <scope>SUBCELLULAR LOCATION [LARGE SCALE ANALYSIS]</scope>
</reference>
<dbReference type="EMBL" id="CU329671">
    <property type="protein sequence ID" value="CAL45666.1"/>
    <property type="molecule type" value="Genomic_DNA"/>
</dbReference>
<dbReference type="RefSeq" id="XP_001713135.1">
    <property type="nucleotide sequence ID" value="XM_001713083.2"/>
</dbReference>
<dbReference type="SMR" id="Q0E7J8"/>
<dbReference type="BioGRID" id="276643">
    <property type="interactions" value="14"/>
</dbReference>
<dbReference type="FunCoup" id="Q0E7J8">
    <property type="interactions" value="3"/>
</dbReference>
<dbReference type="IntAct" id="Q0E7J8">
    <property type="interactions" value="1"/>
</dbReference>
<dbReference type="STRING" id="284812.Q0E7J8"/>
<dbReference type="iPTMnet" id="Q0E7J8"/>
<dbReference type="PaxDb" id="4896-SPBC12D12.09.1"/>
<dbReference type="EnsemblFungi" id="SPBC12D12.09.1">
    <property type="protein sequence ID" value="SPBC12D12.09.1:pep"/>
    <property type="gene ID" value="SPBC12D12.09"/>
</dbReference>
<dbReference type="PomBase" id="SPBC12D12.09">
    <property type="gene designation" value="rev7"/>
</dbReference>
<dbReference type="VEuPathDB" id="FungiDB:SPBC12D12.09"/>
<dbReference type="eggNOG" id="KOG3186">
    <property type="taxonomic scope" value="Eukaryota"/>
</dbReference>
<dbReference type="HOGENOM" id="CLU_050394_1_1_1"/>
<dbReference type="InParanoid" id="Q0E7J8"/>
<dbReference type="OMA" id="DEASHEC"/>
<dbReference type="Reactome" id="R-SPO-110312">
    <property type="pathway name" value="Translesion synthesis by REV1"/>
</dbReference>
<dbReference type="Reactome" id="R-SPO-5655862">
    <property type="pathway name" value="Translesion synthesis by POLK"/>
</dbReference>
<dbReference type="Reactome" id="R-SPO-5656121">
    <property type="pathway name" value="Translesion synthesis by POLI"/>
</dbReference>
<dbReference type="PRO" id="PR:Q0E7J8"/>
<dbReference type="Proteomes" id="UP000002485">
    <property type="component" value="Chromosome II"/>
</dbReference>
<dbReference type="GO" id="GO:0005829">
    <property type="term" value="C:cytosol"/>
    <property type="evidence" value="ECO:0007005"/>
    <property type="project" value="PomBase"/>
</dbReference>
<dbReference type="GO" id="GO:0000262">
    <property type="term" value="C:mitochondrial chromosome"/>
    <property type="evidence" value="ECO:0000305"/>
    <property type="project" value="PomBase"/>
</dbReference>
<dbReference type="GO" id="GO:0043596">
    <property type="term" value="C:nuclear replication fork"/>
    <property type="evidence" value="ECO:0000305"/>
    <property type="project" value="PomBase"/>
</dbReference>
<dbReference type="GO" id="GO:0005634">
    <property type="term" value="C:nucleus"/>
    <property type="evidence" value="ECO:0007005"/>
    <property type="project" value="PomBase"/>
</dbReference>
<dbReference type="GO" id="GO:0016035">
    <property type="term" value="C:zeta DNA polymerase complex"/>
    <property type="evidence" value="ECO:0000318"/>
    <property type="project" value="GO_Central"/>
</dbReference>
<dbReference type="GO" id="GO:0070987">
    <property type="term" value="P:error-free translesion synthesis"/>
    <property type="evidence" value="ECO:0000266"/>
    <property type="project" value="PomBase"/>
</dbReference>
<dbReference type="GO" id="GO:0042276">
    <property type="term" value="P:error-prone translesion synthesis"/>
    <property type="evidence" value="ECO:0000266"/>
    <property type="project" value="PomBase"/>
</dbReference>
<dbReference type="GO" id="GO:0043504">
    <property type="term" value="P:mitochondrial DNA repair"/>
    <property type="evidence" value="ECO:0000305"/>
    <property type="project" value="PomBase"/>
</dbReference>
<dbReference type="Gene3D" id="3.30.900.10">
    <property type="entry name" value="HORMA domain"/>
    <property type="match status" value="1"/>
</dbReference>
<dbReference type="InterPro" id="IPR003511">
    <property type="entry name" value="HORMA_dom"/>
</dbReference>
<dbReference type="InterPro" id="IPR036570">
    <property type="entry name" value="HORMA_dom_sf"/>
</dbReference>
<dbReference type="InterPro" id="IPR045091">
    <property type="entry name" value="Mad2-like"/>
</dbReference>
<dbReference type="PANTHER" id="PTHR11842">
    <property type="entry name" value="MITOTIC SPINDLE ASSEMBLY CHECKPOINT PROTEIN MAD2"/>
    <property type="match status" value="1"/>
</dbReference>
<dbReference type="PANTHER" id="PTHR11842:SF10">
    <property type="entry name" value="MITOTIC SPINDLE ASSEMBLY CHECKPOINT PROTEIN MAD2B"/>
    <property type="match status" value="1"/>
</dbReference>
<dbReference type="Pfam" id="PF02301">
    <property type="entry name" value="HORMA"/>
    <property type="match status" value="1"/>
</dbReference>
<dbReference type="SUPFAM" id="SSF56019">
    <property type="entry name" value="The spindle assembly checkpoint protein mad2"/>
    <property type="match status" value="1"/>
</dbReference>
<dbReference type="PROSITE" id="PS50815">
    <property type="entry name" value="HORMA"/>
    <property type="match status" value="1"/>
</dbReference>
<accession>Q0E7J8</accession>
<organism>
    <name type="scientific">Schizosaccharomyces pombe (strain 972 / ATCC 24843)</name>
    <name type="common">Fission yeast</name>
    <dbReference type="NCBI Taxonomy" id="284812"/>
    <lineage>
        <taxon>Eukaryota</taxon>
        <taxon>Fungi</taxon>
        <taxon>Dikarya</taxon>
        <taxon>Ascomycota</taxon>
        <taxon>Taphrinomycotina</taxon>
        <taxon>Schizosaccharomycetes</taxon>
        <taxon>Schizosaccharomycetales</taxon>
        <taxon>Schizosaccharomycetaceae</taxon>
        <taxon>Schizosaccharomyces</taxon>
    </lineage>
</organism>
<sequence>MENDTGWSVKKCIDIFGEFLLVSIHCILYARRLYPQDLFIKARKYNTIVWQSRHPILCEYIEEVVQSCIEELQTGSVHQVALSIINKEQREEERYVFSTDSIPIIPDFLLEKQISTNEPFTDAYVEYMRASLIQLLNITNGLPLIEQECTWTLRVTLKDGFPRPKQWEEWFLPPQARETDATRQFKGITIPVRNVDIGPMMTEIWVEKYTNSD</sequence>